<comment type="function">
    <text evidence="1">Removes the formyl group from the N-terminal Met of newly synthesized proteins. Requires at least a dipeptide for an efficient rate of reaction. N-terminal L-methionine is a prerequisite for activity but the enzyme has broad specificity at other positions.</text>
</comment>
<comment type="catalytic activity">
    <reaction evidence="1">
        <text>N-terminal N-formyl-L-methionyl-[peptide] + H2O = N-terminal L-methionyl-[peptide] + formate</text>
        <dbReference type="Rhea" id="RHEA:24420"/>
        <dbReference type="Rhea" id="RHEA-COMP:10639"/>
        <dbReference type="Rhea" id="RHEA-COMP:10640"/>
        <dbReference type="ChEBI" id="CHEBI:15377"/>
        <dbReference type="ChEBI" id="CHEBI:15740"/>
        <dbReference type="ChEBI" id="CHEBI:49298"/>
        <dbReference type="ChEBI" id="CHEBI:64731"/>
        <dbReference type="EC" id="3.5.1.88"/>
    </reaction>
</comment>
<comment type="cofactor">
    <cofactor evidence="1">
        <name>Fe(2+)</name>
        <dbReference type="ChEBI" id="CHEBI:29033"/>
    </cofactor>
    <text evidence="1">Binds 1 Fe(2+) ion.</text>
</comment>
<comment type="similarity">
    <text evidence="1">Belongs to the polypeptide deformylase family.</text>
</comment>
<reference key="1">
    <citation type="journal article" date="2000" name="Nature">
        <title>The genome sequence of the plant pathogen Xylella fastidiosa.</title>
        <authorList>
            <person name="Simpson A.J.G."/>
            <person name="Reinach F.C."/>
            <person name="Arruda P."/>
            <person name="Abreu F.A."/>
            <person name="Acencio M."/>
            <person name="Alvarenga R."/>
            <person name="Alves L.M.C."/>
            <person name="Araya J.E."/>
            <person name="Baia G.S."/>
            <person name="Baptista C.S."/>
            <person name="Barros M.H."/>
            <person name="Bonaccorsi E.D."/>
            <person name="Bordin S."/>
            <person name="Bove J.M."/>
            <person name="Briones M.R.S."/>
            <person name="Bueno M.R.P."/>
            <person name="Camargo A.A."/>
            <person name="Camargo L.E.A."/>
            <person name="Carraro D.M."/>
            <person name="Carrer H."/>
            <person name="Colauto N.B."/>
            <person name="Colombo C."/>
            <person name="Costa F.F."/>
            <person name="Costa M.C.R."/>
            <person name="Costa-Neto C.M."/>
            <person name="Coutinho L.L."/>
            <person name="Cristofani M."/>
            <person name="Dias-Neto E."/>
            <person name="Docena C."/>
            <person name="El-Dorry H."/>
            <person name="Facincani A.P."/>
            <person name="Ferreira A.J.S."/>
            <person name="Ferreira V.C.A."/>
            <person name="Ferro J.A."/>
            <person name="Fraga J.S."/>
            <person name="Franca S.C."/>
            <person name="Franco M.C."/>
            <person name="Frohme M."/>
            <person name="Furlan L.R."/>
            <person name="Garnier M."/>
            <person name="Goldman G.H."/>
            <person name="Goldman M.H.S."/>
            <person name="Gomes S.L."/>
            <person name="Gruber A."/>
            <person name="Ho P.L."/>
            <person name="Hoheisel J.D."/>
            <person name="Junqueira M.L."/>
            <person name="Kemper E.L."/>
            <person name="Kitajima J.P."/>
            <person name="Krieger J.E."/>
            <person name="Kuramae E.E."/>
            <person name="Laigret F."/>
            <person name="Lambais M.R."/>
            <person name="Leite L.C.C."/>
            <person name="Lemos E.G.M."/>
            <person name="Lemos M.V.F."/>
            <person name="Lopes S.A."/>
            <person name="Lopes C.R."/>
            <person name="Machado J.A."/>
            <person name="Machado M.A."/>
            <person name="Madeira A.M.B.N."/>
            <person name="Madeira H.M.F."/>
            <person name="Marino C.L."/>
            <person name="Marques M.V."/>
            <person name="Martins E.A.L."/>
            <person name="Martins E.M.F."/>
            <person name="Matsukuma A.Y."/>
            <person name="Menck C.F.M."/>
            <person name="Miracca E.C."/>
            <person name="Miyaki C.Y."/>
            <person name="Monteiro-Vitorello C.B."/>
            <person name="Moon D.H."/>
            <person name="Nagai M.A."/>
            <person name="Nascimento A.L.T.O."/>
            <person name="Netto L.E.S."/>
            <person name="Nhani A. Jr."/>
            <person name="Nobrega F.G."/>
            <person name="Nunes L.R."/>
            <person name="Oliveira M.A."/>
            <person name="de Oliveira M.C."/>
            <person name="de Oliveira R.C."/>
            <person name="Palmieri D.A."/>
            <person name="Paris A."/>
            <person name="Peixoto B.R."/>
            <person name="Pereira G.A.G."/>
            <person name="Pereira H.A. Jr."/>
            <person name="Pesquero J.B."/>
            <person name="Quaggio R.B."/>
            <person name="Roberto P.G."/>
            <person name="Rodrigues V."/>
            <person name="de Rosa A.J.M."/>
            <person name="de Rosa V.E. Jr."/>
            <person name="de Sa R.G."/>
            <person name="Santelli R.V."/>
            <person name="Sawasaki H.E."/>
            <person name="da Silva A.C.R."/>
            <person name="da Silva A.M."/>
            <person name="da Silva F.R."/>
            <person name="Silva W.A. Jr."/>
            <person name="da Silveira J.F."/>
            <person name="Silvestri M.L.Z."/>
            <person name="Siqueira W.J."/>
            <person name="de Souza A.A."/>
            <person name="de Souza A.P."/>
            <person name="Terenzi M.F."/>
            <person name="Truffi D."/>
            <person name="Tsai S.M."/>
            <person name="Tsuhako M.H."/>
            <person name="Vallada H."/>
            <person name="Van Sluys M.A."/>
            <person name="Verjovski-Almeida S."/>
            <person name="Vettore A.L."/>
            <person name="Zago M.A."/>
            <person name="Zatz M."/>
            <person name="Meidanis J."/>
            <person name="Setubal J.C."/>
        </authorList>
    </citation>
    <scope>NUCLEOTIDE SEQUENCE [LARGE SCALE GENOMIC DNA]</scope>
    <source>
        <strain>9a5c</strain>
    </source>
</reference>
<name>DEF_XYLFA</name>
<evidence type="ECO:0000255" key="1">
    <source>
        <dbReference type="HAMAP-Rule" id="MF_00163"/>
    </source>
</evidence>
<proteinExistence type="inferred from homology"/>
<protein>
    <recommendedName>
        <fullName evidence="1">Peptide deformylase</fullName>
        <shortName evidence="1">PDF</shortName>
        <ecNumber evidence="1">3.5.1.88</ecNumber>
    </recommendedName>
    <alternativeName>
        <fullName evidence="1">Polypeptide deformylase</fullName>
    </alternativeName>
</protein>
<sequence>MALLPILEFPDPRLRTKAVRVGVAEVVSSSFQTLLDDMFETMYAAPGIGLAATQVNVHQRFMVIDVSEEKNVPMVFINPEIVTREGDQVFQEGCLSVPGIHADVTRALSIVVRFLDRHGDEQQLTAEGLLAVCIQHEMDHLDGKLFIDYLSPLKRDMVRRKLEKQRRRAS</sequence>
<dbReference type="EC" id="3.5.1.88" evidence="1"/>
<dbReference type="EMBL" id="AE003849">
    <property type="protein sequence ID" value="AAF83736.1"/>
    <property type="molecule type" value="Genomic_DNA"/>
</dbReference>
<dbReference type="PIR" id="H82746">
    <property type="entry name" value="H82746"/>
</dbReference>
<dbReference type="RefSeq" id="WP_004089639.1">
    <property type="nucleotide sequence ID" value="NC_002488.3"/>
</dbReference>
<dbReference type="SMR" id="P63917"/>
<dbReference type="STRING" id="160492.XF_0926"/>
<dbReference type="GeneID" id="93905610"/>
<dbReference type="KEGG" id="xfa:XF_0926"/>
<dbReference type="eggNOG" id="COG0242">
    <property type="taxonomic scope" value="Bacteria"/>
</dbReference>
<dbReference type="HOGENOM" id="CLU_061901_2_1_6"/>
<dbReference type="Proteomes" id="UP000000812">
    <property type="component" value="Chromosome"/>
</dbReference>
<dbReference type="GO" id="GO:0046872">
    <property type="term" value="F:metal ion binding"/>
    <property type="evidence" value="ECO:0007669"/>
    <property type="project" value="UniProtKB-KW"/>
</dbReference>
<dbReference type="GO" id="GO:0042586">
    <property type="term" value="F:peptide deformylase activity"/>
    <property type="evidence" value="ECO:0007669"/>
    <property type="project" value="UniProtKB-UniRule"/>
</dbReference>
<dbReference type="GO" id="GO:0043686">
    <property type="term" value="P:co-translational protein modification"/>
    <property type="evidence" value="ECO:0007669"/>
    <property type="project" value="TreeGrafter"/>
</dbReference>
<dbReference type="GO" id="GO:0006412">
    <property type="term" value="P:translation"/>
    <property type="evidence" value="ECO:0007669"/>
    <property type="project" value="UniProtKB-UniRule"/>
</dbReference>
<dbReference type="CDD" id="cd00487">
    <property type="entry name" value="Pep_deformylase"/>
    <property type="match status" value="1"/>
</dbReference>
<dbReference type="FunFam" id="3.90.45.10:FF:000001">
    <property type="entry name" value="Peptide deformylase"/>
    <property type="match status" value="1"/>
</dbReference>
<dbReference type="Gene3D" id="3.90.45.10">
    <property type="entry name" value="Peptide deformylase"/>
    <property type="match status" value="1"/>
</dbReference>
<dbReference type="HAMAP" id="MF_00163">
    <property type="entry name" value="Pep_deformylase"/>
    <property type="match status" value="1"/>
</dbReference>
<dbReference type="InterPro" id="IPR023635">
    <property type="entry name" value="Peptide_deformylase"/>
</dbReference>
<dbReference type="InterPro" id="IPR036821">
    <property type="entry name" value="Peptide_deformylase_sf"/>
</dbReference>
<dbReference type="NCBIfam" id="TIGR00079">
    <property type="entry name" value="pept_deformyl"/>
    <property type="match status" value="1"/>
</dbReference>
<dbReference type="NCBIfam" id="NF001159">
    <property type="entry name" value="PRK00150.1-3"/>
    <property type="match status" value="1"/>
</dbReference>
<dbReference type="PANTHER" id="PTHR10458">
    <property type="entry name" value="PEPTIDE DEFORMYLASE"/>
    <property type="match status" value="1"/>
</dbReference>
<dbReference type="PANTHER" id="PTHR10458:SF21">
    <property type="entry name" value="PEPTIDE DEFORMYLASE"/>
    <property type="match status" value="1"/>
</dbReference>
<dbReference type="Pfam" id="PF01327">
    <property type="entry name" value="Pep_deformylase"/>
    <property type="match status" value="1"/>
</dbReference>
<dbReference type="PIRSF" id="PIRSF004749">
    <property type="entry name" value="Pep_def"/>
    <property type="match status" value="1"/>
</dbReference>
<dbReference type="PRINTS" id="PR01576">
    <property type="entry name" value="PDEFORMYLASE"/>
</dbReference>
<dbReference type="SUPFAM" id="SSF56420">
    <property type="entry name" value="Peptide deformylase"/>
    <property type="match status" value="1"/>
</dbReference>
<organism>
    <name type="scientific">Xylella fastidiosa (strain 9a5c)</name>
    <dbReference type="NCBI Taxonomy" id="160492"/>
    <lineage>
        <taxon>Bacteria</taxon>
        <taxon>Pseudomonadati</taxon>
        <taxon>Pseudomonadota</taxon>
        <taxon>Gammaproteobacteria</taxon>
        <taxon>Lysobacterales</taxon>
        <taxon>Lysobacteraceae</taxon>
        <taxon>Xylella</taxon>
    </lineage>
</organism>
<feature type="chain" id="PRO_0000082887" description="Peptide deformylase">
    <location>
        <begin position="1"/>
        <end position="170"/>
    </location>
</feature>
<feature type="active site" evidence="1">
    <location>
        <position position="137"/>
    </location>
</feature>
<feature type="binding site" evidence="1">
    <location>
        <position position="94"/>
    </location>
    <ligand>
        <name>Fe cation</name>
        <dbReference type="ChEBI" id="CHEBI:24875"/>
    </ligand>
</feature>
<feature type="binding site" evidence="1">
    <location>
        <position position="136"/>
    </location>
    <ligand>
        <name>Fe cation</name>
        <dbReference type="ChEBI" id="CHEBI:24875"/>
    </ligand>
</feature>
<feature type="binding site" evidence="1">
    <location>
        <position position="140"/>
    </location>
    <ligand>
        <name>Fe cation</name>
        <dbReference type="ChEBI" id="CHEBI:24875"/>
    </ligand>
</feature>
<keyword id="KW-0378">Hydrolase</keyword>
<keyword id="KW-0408">Iron</keyword>
<keyword id="KW-0479">Metal-binding</keyword>
<keyword id="KW-0648">Protein biosynthesis</keyword>
<accession>P63917</accession>
<accession>Q9PEV2</accession>
<gene>
    <name evidence="1" type="primary">def</name>
    <name type="ordered locus">XF_0926</name>
</gene>